<reference key="1">
    <citation type="journal article" date="2006" name="J. Bacteriol.">
        <title>The genome sequence of Methanosphaera stadtmanae reveals why this human intestinal archaeon is restricted to methanol and H2 for methane formation and ATP synthesis.</title>
        <authorList>
            <person name="Fricke W.F."/>
            <person name="Seedorf H."/>
            <person name="Henne A."/>
            <person name="Kruer M."/>
            <person name="Liesegang H."/>
            <person name="Hedderich R."/>
            <person name="Gottschalk G."/>
            <person name="Thauer R.K."/>
        </authorList>
    </citation>
    <scope>NUCLEOTIDE SEQUENCE [LARGE SCALE GENOMIC DNA]</scope>
    <source>
        <strain>ATCC 43021 / DSM 3091 / JCM 11832 / MCB-3</strain>
    </source>
</reference>
<evidence type="ECO:0000255" key="1">
    <source>
        <dbReference type="HAMAP-Rule" id="MF_00001"/>
    </source>
</evidence>
<feature type="chain" id="PRO_1000070900" description="Aspartate carbamoyltransferase catalytic subunit">
    <location>
        <begin position="1"/>
        <end position="304"/>
    </location>
</feature>
<feature type="binding site" evidence="1">
    <location>
        <position position="57"/>
    </location>
    <ligand>
        <name>carbamoyl phosphate</name>
        <dbReference type="ChEBI" id="CHEBI:58228"/>
    </ligand>
</feature>
<feature type="binding site" evidence="1">
    <location>
        <position position="58"/>
    </location>
    <ligand>
        <name>carbamoyl phosphate</name>
        <dbReference type="ChEBI" id="CHEBI:58228"/>
    </ligand>
</feature>
<feature type="binding site" evidence="1">
    <location>
        <position position="86"/>
    </location>
    <ligand>
        <name>L-aspartate</name>
        <dbReference type="ChEBI" id="CHEBI:29991"/>
    </ligand>
</feature>
<feature type="binding site" evidence="1">
    <location>
        <position position="107"/>
    </location>
    <ligand>
        <name>carbamoyl phosphate</name>
        <dbReference type="ChEBI" id="CHEBI:58228"/>
    </ligand>
</feature>
<feature type="binding site" evidence="1">
    <location>
        <position position="135"/>
    </location>
    <ligand>
        <name>carbamoyl phosphate</name>
        <dbReference type="ChEBI" id="CHEBI:58228"/>
    </ligand>
</feature>
<feature type="binding site" evidence="1">
    <location>
        <position position="138"/>
    </location>
    <ligand>
        <name>carbamoyl phosphate</name>
        <dbReference type="ChEBI" id="CHEBI:58228"/>
    </ligand>
</feature>
<feature type="binding site" evidence="1">
    <location>
        <position position="168"/>
    </location>
    <ligand>
        <name>L-aspartate</name>
        <dbReference type="ChEBI" id="CHEBI:29991"/>
    </ligand>
</feature>
<feature type="binding site" evidence="1">
    <location>
        <position position="229"/>
    </location>
    <ligand>
        <name>L-aspartate</name>
        <dbReference type="ChEBI" id="CHEBI:29991"/>
    </ligand>
</feature>
<feature type="binding site" evidence="1">
    <location>
        <position position="266"/>
    </location>
    <ligand>
        <name>carbamoyl phosphate</name>
        <dbReference type="ChEBI" id="CHEBI:58228"/>
    </ligand>
</feature>
<feature type="binding site" evidence="1">
    <location>
        <position position="267"/>
    </location>
    <ligand>
        <name>carbamoyl phosphate</name>
        <dbReference type="ChEBI" id="CHEBI:58228"/>
    </ligand>
</feature>
<name>PYRB_METST</name>
<sequence length="304" mass="34542">MKFSLENIISIRDFKKSDVEYILNLAEEMEPIAKSQKVCHEKDGKLLGVMFYEPSTRTRLSFETAMKRLGGDVVGFNQKQGTSIQKGEVLYDTAQIVSQYTDAIVLRHDMEGAARFVSNIVDVPVINAGDGAGQHPTQTMLDLYTIKRTLGELKNLKIALVGDLKYGRTVHSLVYALAMFNVEIVFISPSELEMPPEILRDLEKLNCKFSIKNSLIENIDDVDVIYMTRIQKERFPDPKEYLKVKGQYTLTSKNLKDSNTIIMHPLPRVDEIDFNVDNLSNAMYFKQAFYGVPVRMALLDSIIK</sequence>
<keyword id="KW-0665">Pyrimidine biosynthesis</keyword>
<keyword id="KW-1185">Reference proteome</keyword>
<keyword id="KW-0808">Transferase</keyword>
<organism>
    <name type="scientific">Methanosphaera stadtmanae (strain ATCC 43021 / DSM 3091 / JCM 11832 / MCB-3)</name>
    <dbReference type="NCBI Taxonomy" id="339860"/>
    <lineage>
        <taxon>Archaea</taxon>
        <taxon>Methanobacteriati</taxon>
        <taxon>Methanobacteriota</taxon>
        <taxon>Methanomada group</taxon>
        <taxon>Methanobacteria</taxon>
        <taxon>Methanobacteriales</taxon>
        <taxon>Methanobacteriaceae</taxon>
        <taxon>Methanosphaera</taxon>
    </lineage>
</organism>
<dbReference type="EC" id="2.1.3.2" evidence="1"/>
<dbReference type="EMBL" id="CP000102">
    <property type="protein sequence ID" value="ABC56423.1"/>
    <property type="molecule type" value="Genomic_DNA"/>
</dbReference>
<dbReference type="RefSeq" id="WP_011405622.1">
    <property type="nucleotide sequence ID" value="NC_007681.1"/>
</dbReference>
<dbReference type="SMR" id="Q2NIC0"/>
<dbReference type="STRING" id="339860.Msp_0003"/>
<dbReference type="GeneID" id="41324576"/>
<dbReference type="KEGG" id="mst:Msp_0003"/>
<dbReference type="eggNOG" id="arCOG00911">
    <property type="taxonomic scope" value="Archaea"/>
</dbReference>
<dbReference type="HOGENOM" id="CLU_043846_1_2_2"/>
<dbReference type="OrthoDB" id="7792at2157"/>
<dbReference type="UniPathway" id="UPA00070">
    <property type="reaction ID" value="UER00116"/>
</dbReference>
<dbReference type="Proteomes" id="UP000001931">
    <property type="component" value="Chromosome"/>
</dbReference>
<dbReference type="GO" id="GO:0016597">
    <property type="term" value="F:amino acid binding"/>
    <property type="evidence" value="ECO:0007669"/>
    <property type="project" value="InterPro"/>
</dbReference>
<dbReference type="GO" id="GO:0004070">
    <property type="term" value="F:aspartate carbamoyltransferase activity"/>
    <property type="evidence" value="ECO:0007669"/>
    <property type="project" value="UniProtKB-UniRule"/>
</dbReference>
<dbReference type="GO" id="GO:0006207">
    <property type="term" value="P:'de novo' pyrimidine nucleobase biosynthetic process"/>
    <property type="evidence" value="ECO:0007669"/>
    <property type="project" value="InterPro"/>
</dbReference>
<dbReference type="GO" id="GO:0044205">
    <property type="term" value="P:'de novo' UMP biosynthetic process"/>
    <property type="evidence" value="ECO:0007669"/>
    <property type="project" value="UniProtKB-UniRule"/>
</dbReference>
<dbReference type="GO" id="GO:0006520">
    <property type="term" value="P:amino acid metabolic process"/>
    <property type="evidence" value="ECO:0007669"/>
    <property type="project" value="InterPro"/>
</dbReference>
<dbReference type="FunFam" id="3.40.50.1370:FF:000001">
    <property type="entry name" value="Aspartate carbamoyltransferase"/>
    <property type="match status" value="1"/>
</dbReference>
<dbReference type="FunFam" id="3.40.50.1370:FF:000002">
    <property type="entry name" value="Aspartate carbamoyltransferase 2"/>
    <property type="match status" value="1"/>
</dbReference>
<dbReference type="Gene3D" id="3.40.50.1370">
    <property type="entry name" value="Aspartate/ornithine carbamoyltransferase"/>
    <property type="match status" value="2"/>
</dbReference>
<dbReference type="HAMAP" id="MF_00001">
    <property type="entry name" value="Asp_carb_tr"/>
    <property type="match status" value="1"/>
</dbReference>
<dbReference type="InterPro" id="IPR006132">
    <property type="entry name" value="Asp/Orn_carbamoyltranf_P-bd"/>
</dbReference>
<dbReference type="InterPro" id="IPR006130">
    <property type="entry name" value="Asp/Orn_carbamoylTrfase"/>
</dbReference>
<dbReference type="InterPro" id="IPR036901">
    <property type="entry name" value="Asp/Orn_carbamoylTrfase_sf"/>
</dbReference>
<dbReference type="InterPro" id="IPR002082">
    <property type="entry name" value="Asp_carbamoyltransf"/>
</dbReference>
<dbReference type="InterPro" id="IPR006131">
    <property type="entry name" value="Asp_carbamoyltransf_Asp/Orn-bd"/>
</dbReference>
<dbReference type="NCBIfam" id="TIGR00670">
    <property type="entry name" value="asp_carb_tr"/>
    <property type="match status" value="1"/>
</dbReference>
<dbReference type="NCBIfam" id="NF002032">
    <property type="entry name" value="PRK00856.1"/>
    <property type="match status" value="1"/>
</dbReference>
<dbReference type="PANTHER" id="PTHR45753:SF6">
    <property type="entry name" value="ASPARTATE CARBAMOYLTRANSFERASE"/>
    <property type="match status" value="1"/>
</dbReference>
<dbReference type="PANTHER" id="PTHR45753">
    <property type="entry name" value="ORNITHINE CARBAMOYLTRANSFERASE, MITOCHONDRIAL"/>
    <property type="match status" value="1"/>
</dbReference>
<dbReference type="Pfam" id="PF00185">
    <property type="entry name" value="OTCace"/>
    <property type="match status" value="1"/>
</dbReference>
<dbReference type="Pfam" id="PF02729">
    <property type="entry name" value="OTCace_N"/>
    <property type="match status" value="1"/>
</dbReference>
<dbReference type="PRINTS" id="PR00100">
    <property type="entry name" value="AOTCASE"/>
</dbReference>
<dbReference type="PRINTS" id="PR00101">
    <property type="entry name" value="ATCASE"/>
</dbReference>
<dbReference type="SUPFAM" id="SSF53671">
    <property type="entry name" value="Aspartate/ornithine carbamoyltransferase"/>
    <property type="match status" value="1"/>
</dbReference>
<dbReference type="PROSITE" id="PS00097">
    <property type="entry name" value="CARBAMOYLTRANSFERASE"/>
    <property type="match status" value="1"/>
</dbReference>
<comment type="function">
    <text evidence="1">Catalyzes the condensation of carbamoyl phosphate and aspartate to form carbamoyl aspartate and inorganic phosphate, the committed step in the de novo pyrimidine nucleotide biosynthesis pathway.</text>
</comment>
<comment type="catalytic activity">
    <reaction evidence="1">
        <text>carbamoyl phosphate + L-aspartate = N-carbamoyl-L-aspartate + phosphate + H(+)</text>
        <dbReference type="Rhea" id="RHEA:20013"/>
        <dbReference type="ChEBI" id="CHEBI:15378"/>
        <dbReference type="ChEBI" id="CHEBI:29991"/>
        <dbReference type="ChEBI" id="CHEBI:32814"/>
        <dbReference type="ChEBI" id="CHEBI:43474"/>
        <dbReference type="ChEBI" id="CHEBI:58228"/>
        <dbReference type="EC" id="2.1.3.2"/>
    </reaction>
</comment>
<comment type="pathway">
    <text evidence="1">Pyrimidine metabolism; UMP biosynthesis via de novo pathway; (S)-dihydroorotate from bicarbonate: step 2/3.</text>
</comment>
<comment type="subunit">
    <text evidence="1">Heterooligomer of catalytic and regulatory chains.</text>
</comment>
<comment type="similarity">
    <text evidence="1">Belongs to the aspartate/ornithine carbamoyltransferase superfamily. ATCase family.</text>
</comment>
<protein>
    <recommendedName>
        <fullName evidence="1">Aspartate carbamoyltransferase catalytic subunit</fullName>
        <ecNumber evidence="1">2.1.3.2</ecNumber>
    </recommendedName>
    <alternativeName>
        <fullName evidence="1">Aspartate transcarbamylase</fullName>
        <shortName evidence="1">ATCase</shortName>
    </alternativeName>
</protein>
<gene>
    <name evidence="1" type="primary">pyrB</name>
    <name type="ordered locus">Msp_0003</name>
</gene>
<accession>Q2NIC0</accession>
<proteinExistence type="inferred from homology"/>